<feature type="chain" id="PRO_0000276323" description="Photosystem II reaction center protein T">
    <location>
        <begin position="1"/>
        <end position="32"/>
    </location>
</feature>
<feature type="transmembrane region" description="Helical" evidence="1">
    <location>
        <begin position="3"/>
        <end position="23"/>
    </location>
</feature>
<feature type="helix" evidence="2">
    <location>
        <begin position="2"/>
        <end position="22"/>
    </location>
</feature>
<sequence length="32" mass="3795">MEALVYTFLLIGTLMVIFFAVFFRDTPRILKK</sequence>
<accession>A0T0P6</accession>
<protein>
    <recommendedName>
        <fullName evidence="1">Photosystem II reaction center protein T</fullName>
        <shortName evidence="1">PSII-T</shortName>
    </recommendedName>
</protein>
<dbReference type="EMBL" id="EF067921">
    <property type="protein sequence ID" value="ABK20731.1"/>
    <property type="molecule type" value="Genomic_DNA"/>
</dbReference>
<dbReference type="RefSeq" id="YP_874508.1">
    <property type="nucleotide sequence ID" value="NC_008589.1"/>
</dbReference>
<dbReference type="PDB" id="8IWH">
    <property type="method" value="EM"/>
    <property type="resolution" value="2.68 A"/>
    <property type="chains" value="T/t=1-28"/>
</dbReference>
<dbReference type="PDBsum" id="8IWH"/>
<dbReference type="EMDB" id="EMD-35766"/>
<dbReference type="SMR" id="A0T0P6"/>
<dbReference type="STRING" id="35128.A0T0P6"/>
<dbReference type="GeneID" id="4524803"/>
<dbReference type="InParanoid" id="A0T0P6"/>
<dbReference type="GO" id="GO:0009535">
    <property type="term" value="C:chloroplast thylakoid membrane"/>
    <property type="evidence" value="ECO:0007669"/>
    <property type="project" value="UniProtKB-SubCell"/>
</dbReference>
<dbReference type="GO" id="GO:0009539">
    <property type="term" value="C:photosystem II reaction center"/>
    <property type="evidence" value="ECO:0007669"/>
    <property type="project" value="InterPro"/>
</dbReference>
<dbReference type="GO" id="GO:0015979">
    <property type="term" value="P:photosynthesis"/>
    <property type="evidence" value="ECO:0007669"/>
    <property type="project" value="UniProtKB-UniRule"/>
</dbReference>
<dbReference type="HAMAP" id="MF_00808">
    <property type="entry name" value="PSII_PsbT"/>
    <property type="match status" value="1"/>
</dbReference>
<dbReference type="InterPro" id="IPR001743">
    <property type="entry name" value="PSII_PsbT"/>
</dbReference>
<dbReference type="InterPro" id="IPR037268">
    <property type="entry name" value="PSII_PsbT_sf"/>
</dbReference>
<dbReference type="PANTHER" id="PTHR36411">
    <property type="match status" value="1"/>
</dbReference>
<dbReference type="PANTHER" id="PTHR36411:SF2">
    <property type="entry name" value="PHOTOSYSTEM II REACTION CENTER PROTEIN T"/>
    <property type="match status" value="1"/>
</dbReference>
<dbReference type="Pfam" id="PF01405">
    <property type="entry name" value="PsbT"/>
    <property type="match status" value="1"/>
</dbReference>
<dbReference type="SUPFAM" id="SSF161029">
    <property type="entry name" value="Photosystem II reaction center protein T, PsbT"/>
    <property type="match status" value="1"/>
</dbReference>
<keyword id="KW-0002">3D-structure</keyword>
<keyword id="KW-0150">Chloroplast</keyword>
<keyword id="KW-0472">Membrane</keyword>
<keyword id="KW-0602">Photosynthesis</keyword>
<keyword id="KW-0604">Photosystem II</keyword>
<keyword id="KW-0934">Plastid</keyword>
<keyword id="KW-0793">Thylakoid</keyword>
<keyword id="KW-0812">Transmembrane</keyword>
<keyword id="KW-1133">Transmembrane helix</keyword>
<proteinExistence type="evidence at protein level"/>
<name>PSBT_THAPS</name>
<comment type="function">
    <text evidence="1">Found at the monomer-monomer interface of the photosystem II (PS II) dimer, plays a role in assembly and dimerization of PSII. PSII is a light-driven water plastoquinone oxidoreductase, using light energy to abstract electrons from H(2)O, generating a proton gradient subsequently used for ATP formation.</text>
</comment>
<comment type="subunit">
    <text evidence="1">PSII is composed of 1 copy each of membrane proteins PsbA, PsbB, PsbC, PsbD, PsbE, PsbF, PsbH, PsbI, PsbJ, PsbK, PsbL, PsbM, PsbT, PsbX, PsbY, PsbZ, Psb30/Ycf12, at least 3 peripheral proteins of the oxygen-evolving complex and a large number of cofactors. It forms dimeric complexes.</text>
</comment>
<comment type="subcellular location">
    <subcellularLocation>
        <location evidence="1">Plastid</location>
        <location evidence="1">Chloroplast thylakoid membrane</location>
        <topology evidence="1">Single-pass membrane protein</topology>
    </subcellularLocation>
</comment>
<comment type="similarity">
    <text evidence="1">Belongs to the PsbT family.</text>
</comment>
<geneLocation type="chloroplast"/>
<evidence type="ECO:0000255" key="1">
    <source>
        <dbReference type="HAMAP-Rule" id="MF_00808"/>
    </source>
</evidence>
<evidence type="ECO:0007829" key="2">
    <source>
        <dbReference type="PDB" id="8IWH"/>
    </source>
</evidence>
<organism>
    <name type="scientific">Thalassiosira pseudonana</name>
    <name type="common">Marine diatom</name>
    <name type="synonym">Cyclotella nana</name>
    <dbReference type="NCBI Taxonomy" id="35128"/>
    <lineage>
        <taxon>Eukaryota</taxon>
        <taxon>Sar</taxon>
        <taxon>Stramenopiles</taxon>
        <taxon>Ochrophyta</taxon>
        <taxon>Bacillariophyta</taxon>
        <taxon>Coscinodiscophyceae</taxon>
        <taxon>Thalassiosirophycidae</taxon>
        <taxon>Thalassiosirales</taxon>
        <taxon>Thalassiosiraceae</taxon>
        <taxon>Thalassiosira</taxon>
    </lineage>
</organism>
<reference key="1">
    <citation type="journal article" date="2007" name="Mol. Genet. Genomics">
        <title>Chloroplast genomes of the diatoms Phaeodactylum tricornutum and Thalassiosira pseudonana: comparison with other plastid genomes of the red lineage.</title>
        <authorList>
            <person name="Oudot-Le Secq M.-P."/>
            <person name="Grimwood J."/>
            <person name="Shapiro H."/>
            <person name="Armbrust E.V."/>
            <person name="Bowler C."/>
            <person name="Green B.R."/>
        </authorList>
    </citation>
    <scope>NUCLEOTIDE SEQUENCE [LARGE SCALE GENOMIC DNA]</scope>
    <source>
        <strain>CCMP1335 / NEPCC58 / CCAP 1085/12</strain>
    </source>
</reference>
<gene>
    <name evidence="1" type="primary">psbT</name>
</gene>